<name>IRGA_VIBC3</name>
<dbReference type="EMBL" id="U72152">
    <property type="protein sequence ID" value="AAC44766.1"/>
    <property type="molecule type" value="Genomic_DNA"/>
</dbReference>
<dbReference type="EMBL" id="CP000627">
    <property type="protein sequence ID" value="ABQ21321.1"/>
    <property type="molecule type" value="Genomic_DNA"/>
</dbReference>
<dbReference type="EMBL" id="CP001235">
    <property type="protein sequence ID" value="ACP08538.1"/>
    <property type="molecule type" value="Genomic_DNA"/>
</dbReference>
<dbReference type="PIR" id="S25265">
    <property type="entry name" value="S25265"/>
</dbReference>
<dbReference type="RefSeq" id="WP_000086051.1">
    <property type="nucleotide sequence ID" value="NZ_JAACZH010000029.1"/>
</dbReference>
<dbReference type="SMR" id="A5F9G0"/>
<dbReference type="TCDB" id="1.B.14.1.32">
    <property type="family name" value="the outer membrane receptor (omr) family"/>
</dbReference>
<dbReference type="KEGG" id="vco:VC0395_A0028"/>
<dbReference type="KEGG" id="vcr:VC395_0519"/>
<dbReference type="PATRIC" id="fig|345073.21.peg.507"/>
<dbReference type="eggNOG" id="COG4771">
    <property type="taxonomic scope" value="Bacteria"/>
</dbReference>
<dbReference type="HOGENOM" id="CLU_008287_18_2_6"/>
<dbReference type="OrthoDB" id="9764669at2"/>
<dbReference type="Proteomes" id="UP000000249">
    <property type="component" value="Chromosome 2"/>
</dbReference>
<dbReference type="GO" id="GO:0009279">
    <property type="term" value="C:cell outer membrane"/>
    <property type="evidence" value="ECO:0007669"/>
    <property type="project" value="UniProtKB-SubCell"/>
</dbReference>
<dbReference type="GO" id="GO:0015344">
    <property type="term" value="F:siderophore uptake transmembrane transporter activity"/>
    <property type="evidence" value="ECO:0007669"/>
    <property type="project" value="TreeGrafter"/>
</dbReference>
<dbReference type="CDD" id="cd01347">
    <property type="entry name" value="ligand_gated_channel"/>
    <property type="match status" value="1"/>
</dbReference>
<dbReference type="FunFam" id="2.170.130.10:FF:000004">
    <property type="entry name" value="Colicin I TonB-dependent receptor"/>
    <property type="match status" value="1"/>
</dbReference>
<dbReference type="FunFam" id="2.40.170.20:FF:000016">
    <property type="entry name" value="Iron-regulated outer membrane virulence protein"/>
    <property type="match status" value="1"/>
</dbReference>
<dbReference type="Gene3D" id="2.40.170.20">
    <property type="entry name" value="TonB-dependent receptor, beta-barrel domain"/>
    <property type="match status" value="1"/>
</dbReference>
<dbReference type="Gene3D" id="2.170.130.10">
    <property type="entry name" value="TonB-dependent receptor, plug domain"/>
    <property type="match status" value="1"/>
</dbReference>
<dbReference type="InterPro" id="IPR012910">
    <property type="entry name" value="Plug_dom"/>
</dbReference>
<dbReference type="InterPro" id="IPR037066">
    <property type="entry name" value="Plug_dom_sf"/>
</dbReference>
<dbReference type="InterPro" id="IPR039426">
    <property type="entry name" value="TonB-dep_rcpt-like"/>
</dbReference>
<dbReference type="InterPro" id="IPR000531">
    <property type="entry name" value="TonB-dep_rcpt_b-brl"/>
</dbReference>
<dbReference type="InterPro" id="IPR010916">
    <property type="entry name" value="TonB_box_CS"/>
</dbReference>
<dbReference type="InterPro" id="IPR036942">
    <property type="entry name" value="TonB_rcpt_b-brl_sf"/>
</dbReference>
<dbReference type="InterPro" id="IPR010917">
    <property type="entry name" value="TonB_rcpt_CS"/>
</dbReference>
<dbReference type="NCBIfam" id="NF010010">
    <property type="entry name" value="PRK13483.1"/>
    <property type="match status" value="1"/>
</dbReference>
<dbReference type="PANTHER" id="PTHR30069:SF53">
    <property type="entry name" value="COLICIN I RECEPTOR-RELATED"/>
    <property type="match status" value="1"/>
</dbReference>
<dbReference type="PANTHER" id="PTHR30069">
    <property type="entry name" value="TONB-DEPENDENT OUTER MEMBRANE RECEPTOR"/>
    <property type="match status" value="1"/>
</dbReference>
<dbReference type="Pfam" id="PF07715">
    <property type="entry name" value="Plug"/>
    <property type="match status" value="1"/>
</dbReference>
<dbReference type="Pfam" id="PF00593">
    <property type="entry name" value="TonB_dep_Rec_b-barrel"/>
    <property type="match status" value="1"/>
</dbReference>
<dbReference type="SUPFAM" id="SSF56935">
    <property type="entry name" value="Porins"/>
    <property type="match status" value="1"/>
</dbReference>
<dbReference type="PROSITE" id="PS00430">
    <property type="entry name" value="TONB_DEPENDENT_REC_1"/>
    <property type="match status" value="1"/>
</dbReference>
<dbReference type="PROSITE" id="PS01156">
    <property type="entry name" value="TONB_DEPENDENT_REC_2"/>
    <property type="match status" value="1"/>
</dbReference>
<dbReference type="PROSITE" id="PS52016">
    <property type="entry name" value="TONB_DEPENDENT_REC_3"/>
    <property type="match status" value="1"/>
</dbReference>
<accession>A5F9G0</accession>
<accession>C3LX28</accession>
<accession>P27772</accession>
<accession>Q9KUP0</accession>
<gene>
    <name type="primary">irgA</name>
    <name type="ordered locus">VC0395_A0028</name>
    <name type="ordered locus">VC395_0519</name>
</gene>
<feature type="signal peptide" evidence="1">
    <location>
        <begin position="1"/>
        <end position="25"/>
    </location>
</feature>
<feature type="chain" id="PRO_0000324812" description="Iron-regulated outer membrane virulence protein">
    <location>
        <begin position="26"/>
        <end position="652"/>
    </location>
</feature>
<feature type="domain" description="TBDR plug" evidence="2">
    <location>
        <begin position="45"/>
        <end position="162"/>
    </location>
</feature>
<feature type="domain" description="TBDR beta-barrel" evidence="2">
    <location>
        <begin position="167"/>
        <end position="652"/>
    </location>
</feature>
<feature type="short sequence motif" description="TonB box">
    <location>
        <begin position="33"/>
        <end position="40"/>
    </location>
</feature>
<feature type="short sequence motif" description="TonB C-terminal box">
    <location>
        <begin position="635"/>
        <end position="652"/>
    </location>
</feature>
<reference key="1">
    <citation type="journal article" date="1992" name="Mol. Microbiol.">
        <title>Characterization of a Vibrio cholerae virulence factor homologous to the family of TonB-dependent proteins.</title>
        <authorList>
            <person name="Goldberg M.B."/>
            <person name="Boyko S.A."/>
            <person name="Butterton J.R."/>
            <person name="Stoebner J.A."/>
            <person name="Payne S.M."/>
            <person name="Calderwood S.B."/>
        </authorList>
    </citation>
    <scope>NUCLEOTIDE SEQUENCE [GENOMIC DNA]</scope>
</reference>
<reference key="2">
    <citation type="submission" date="2007-03" db="EMBL/GenBank/DDBJ databases">
        <authorList>
            <person name="Heidelberg J."/>
        </authorList>
    </citation>
    <scope>NUCLEOTIDE SEQUENCE [LARGE SCALE GENOMIC DNA]</scope>
    <source>
        <strain>ATCC 39541 / Classical Ogawa 395 / O395</strain>
    </source>
</reference>
<reference key="3">
    <citation type="journal article" date="2008" name="PLoS ONE">
        <title>A recalibrated molecular clock and independent origins for the cholera pandemic clones.</title>
        <authorList>
            <person name="Feng L."/>
            <person name="Reeves P.R."/>
            <person name="Lan R."/>
            <person name="Ren Y."/>
            <person name="Gao C."/>
            <person name="Zhou Z."/>
            <person name="Ren Y."/>
            <person name="Cheng J."/>
            <person name="Wang W."/>
            <person name="Wang J."/>
            <person name="Qian W."/>
            <person name="Li D."/>
            <person name="Wang L."/>
        </authorList>
    </citation>
    <scope>NUCLEOTIDE SEQUENCE [LARGE SCALE GENOMIC DNA]</scope>
    <source>
        <strain>ATCC 39541 / Classical Ogawa 395 / O395</strain>
    </source>
</reference>
<reference key="4">
    <citation type="journal article" date="1990" name="J. Bacteriol.">
        <title>Transcriptional regulation by iron of a Vibrio cholerae virulence gene and homology of the gene to the Escherichia coli fur system.</title>
        <authorList>
            <person name="Goldberg M.B."/>
            <person name="Boyko S.A."/>
            <person name="Calderwood S.B."/>
        </authorList>
    </citation>
    <scope>NUCLEOTIDE SEQUENCE [GENOMIC DNA] OF 1-151</scope>
</reference>
<sequence length="652" mass="71641">MSRFNPSPVSLSVTLGLMFSASAFAQDATKTDETMVVTAAGYAQVIQNAPASISVISREDLESRYYRDVTDALKSVPGVTVTGGGDTTDISIRGMGSNYTLILVDGKRQTSRQTRPNSDGPGIEQGWLPPLQAIERIEVIRGPMSTLYGSDAIGGVINIITRKDQQQWSGNVQLSTVVQENRASGDEQSANFFVTGPLSDALSLQVYGQTTQRDEDEIEHGYGDKSLRSLTSKLNYQLNPDHQLQLEAGVSAQDRENNVGKSAQSSGCRGTCSNTDNQYRRNHVAVSHQGDWQGVGQSDTYLQYEENTNKSREMSIDNTVFKSTLVAPIGEHMLSFGVEGKHESLEDKTSNKISSRTHISNTQWAGFIEDEWALAEQFRLTFGGRLDHDKNYGSHFSPRVYGVWNLDPLWTVKGGVSTGFRAPQLREVTPDWGQVSGGGNIYGNPDLQPETSINKELSLMYSTGSGLAASLTAFHNDFKDKITRVACPANICTAGPNQWGATPTYRVNIDEAETYGAEATLSLPITESVELSSSYTYTHSEQKSGNFAGRPLLQLPKHLFNANLSWQTTDRLNSWANLNYRGKEMQPEGGASNDDFIAPSYTFIDTGVTYALTDTATIKAAVYNLFDQEVNYAEYGYVEDGRRYWLGLDIAF</sequence>
<comment type="function">
    <text>Involved in the initial step of iron uptake by binding ferric vibriobactin, an iron chelatin siderophore that allows V.cholerae to extract iron from the environment.</text>
</comment>
<comment type="subcellular location">
    <subcellularLocation>
        <location evidence="2">Cell outer membrane</location>
        <topology evidence="2">Multi-pass membrane protein</topology>
    </subcellularLocation>
</comment>
<comment type="miscellaneous">
    <text>Regulation of the irgA expression is negatively regulated at the transcriptional level by iron.</text>
</comment>
<comment type="similarity">
    <text evidence="3">Belongs to the TonB-dependent receptor family.</text>
</comment>
<keyword id="KW-0998">Cell outer membrane</keyword>
<keyword id="KW-0406">Ion transport</keyword>
<keyword id="KW-0408">Iron</keyword>
<keyword id="KW-0410">Iron transport</keyword>
<keyword id="KW-0472">Membrane</keyword>
<keyword id="KW-0675">Receptor</keyword>
<keyword id="KW-0732">Signal</keyword>
<keyword id="KW-0798">TonB box</keyword>
<keyword id="KW-0812">Transmembrane</keyword>
<keyword id="KW-1134">Transmembrane beta strand</keyword>
<keyword id="KW-0813">Transport</keyword>
<keyword id="KW-0843">Virulence</keyword>
<proteinExistence type="inferred from homology"/>
<protein>
    <recommendedName>
        <fullName>Iron-regulated outer membrane virulence protein</fullName>
    </recommendedName>
</protein>
<organism>
    <name type="scientific">Vibrio cholerae serotype O1 (strain ATCC 39541 / Classical Ogawa 395 / O395)</name>
    <dbReference type="NCBI Taxonomy" id="345073"/>
    <lineage>
        <taxon>Bacteria</taxon>
        <taxon>Pseudomonadati</taxon>
        <taxon>Pseudomonadota</taxon>
        <taxon>Gammaproteobacteria</taxon>
        <taxon>Vibrionales</taxon>
        <taxon>Vibrionaceae</taxon>
        <taxon>Vibrio</taxon>
    </lineage>
</organism>
<evidence type="ECO:0000255" key="1"/>
<evidence type="ECO:0000255" key="2">
    <source>
        <dbReference type="PROSITE-ProRule" id="PRU01360"/>
    </source>
</evidence>
<evidence type="ECO:0000305" key="3"/>